<reference key="1">
    <citation type="submission" date="2003-10" db="EMBL/GenBank/DDBJ databases">
        <title>The complete genome sequence of the alkaliphilic Bacillus clausii KSM-K16.</title>
        <authorList>
            <person name="Takaki Y."/>
            <person name="Kageyama Y."/>
            <person name="Shimamura S."/>
            <person name="Suzuki H."/>
            <person name="Nishi S."/>
            <person name="Hatada Y."/>
            <person name="Kawai S."/>
            <person name="Ito S."/>
            <person name="Horikoshi K."/>
        </authorList>
    </citation>
    <scope>NUCLEOTIDE SEQUENCE [LARGE SCALE GENOMIC DNA]</scope>
    <source>
        <strain>KSM-K16</strain>
    </source>
</reference>
<dbReference type="EC" id="1.17.99.9" evidence="1"/>
<dbReference type="EMBL" id="AP006627">
    <property type="protein sequence ID" value="BAD64929.1"/>
    <property type="molecule type" value="Genomic_DNA"/>
</dbReference>
<dbReference type="RefSeq" id="WP_011247237.1">
    <property type="nucleotide sequence ID" value="NC_006582.1"/>
</dbReference>
<dbReference type="SMR" id="Q5WFD1"/>
<dbReference type="STRING" id="66692.ABC2394"/>
<dbReference type="KEGG" id="bcl:ABC2394"/>
<dbReference type="eggNOG" id="COG1612">
    <property type="taxonomic scope" value="Bacteria"/>
</dbReference>
<dbReference type="HOGENOM" id="CLU_041525_3_0_9"/>
<dbReference type="OrthoDB" id="9816428at2"/>
<dbReference type="UniPathway" id="UPA00269">
    <property type="reaction ID" value="UER00713"/>
</dbReference>
<dbReference type="Proteomes" id="UP000001168">
    <property type="component" value="Chromosome"/>
</dbReference>
<dbReference type="GO" id="GO:0005886">
    <property type="term" value="C:plasma membrane"/>
    <property type="evidence" value="ECO:0007669"/>
    <property type="project" value="UniProtKB-SubCell"/>
</dbReference>
<dbReference type="GO" id="GO:0046872">
    <property type="term" value="F:metal ion binding"/>
    <property type="evidence" value="ECO:0007669"/>
    <property type="project" value="UniProtKB-KW"/>
</dbReference>
<dbReference type="GO" id="GO:0016653">
    <property type="term" value="F:oxidoreductase activity, acting on NAD(P)H, heme protein as acceptor"/>
    <property type="evidence" value="ECO:0007669"/>
    <property type="project" value="InterPro"/>
</dbReference>
<dbReference type="GO" id="GO:0006784">
    <property type="term" value="P:heme A biosynthetic process"/>
    <property type="evidence" value="ECO:0007669"/>
    <property type="project" value="UniProtKB-UniRule"/>
</dbReference>
<dbReference type="HAMAP" id="MF_01664">
    <property type="entry name" value="HemeA_synth_type1"/>
    <property type="match status" value="1"/>
</dbReference>
<dbReference type="InterPro" id="IPR003780">
    <property type="entry name" value="COX15/CtaA_fam"/>
</dbReference>
<dbReference type="InterPro" id="IPR050450">
    <property type="entry name" value="COX15/CtaA_HemeA_synthase"/>
</dbReference>
<dbReference type="InterPro" id="IPR023755">
    <property type="entry name" value="HemeA_Synthase_type1"/>
</dbReference>
<dbReference type="PANTHER" id="PTHR35457">
    <property type="entry name" value="HEME A SYNTHASE"/>
    <property type="match status" value="1"/>
</dbReference>
<dbReference type="PANTHER" id="PTHR35457:SF1">
    <property type="entry name" value="HEME A SYNTHASE"/>
    <property type="match status" value="1"/>
</dbReference>
<dbReference type="Pfam" id="PF02628">
    <property type="entry name" value="COX15-CtaA"/>
    <property type="match status" value="1"/>
</dbReference>
<organism>
    <name type="scientific">Shouchella clausii (strain KSM-K16)</name>
    <name type="common">Alkalihalobacillus clausii</name>
    <dbReference type="NCBI Taxonomy" id="66692"/>
    <lineage>
        <taxon>Bacteria</taxon>
        <taxon>Bacillati</taxon>
        <taxon>Bacillota</taxon>
        <taxon>Bacilli</taxon>
        <taxon>Bacillales</taxon>
        <taxon>Bacillaceae</taxon>
        <taxon>Shouchella</taxon>
    </lineage>
</organism>
<proteinExistence type="inferred from homology"/>
<evidence type="ECO:0000255" key="1">
    <source>
        <dbReference type="HAMAP-Rule" id="MF_01664"/>
    </source>
</evidence>
<feature type="chain" id="PRO_0000348971" description="Heme A synthase">
    <location>
        <begin position="1"/>
        <end position="301"/>
    </location>
</feature>
<feature type="topological domain" description="Cytoplasmic" evidence="1">
    <location>
        <begin position="1"/>
        <end position="7"/>
    </location>
</feature>
<feature type="transmembrane region" description="Helical" evidence="1">
    <location>
        <begin position="8"/>
        <end position="28"/>
    </location>
</feature>
<feature type="topological domain" description="Extracellular" evidence="1">
    <location>
        <begin position="29"/>
        <end position="56"/>
    </location>
</feature>
<feature type="transmembrane region" description="Helical" evidence="1">
    <location>
        <begin position="57"/>
        <end position="77"/>
    </location>
</feature>
<feature type="topological domain" description="Cytoplasmic" evidence="1">
    <location>
        <begin position="78"/>
        <end position="92"/>
    </location>
</feature>
<feature type="transmembrane region" description="Helical" evidence="1">
    <location>
        <begin position="93"/>
        <end position="113"/>
    </location>
</feature>
<feature type="topological domain" description="Extracellular" evidence="1">
    <location>
        <begin position="114"/>
        <end position="117"/>
    </location>
</feature>
<feature type="transmembrane region" description="Helical" evidence="1">
    <location>
        <begin position="118"/>
        <end position="138"/>
    </location>
</feature>
<feature type="topological domain" description="Cytoplasmic" evidence="1">
    <location>
        <begin position="139"/>
        <end position="159"/>
    </location>
</feature>
<feature type="transmembrane region" description="Helical" evidence="1">
    <location>
        <begin position="160"/>
        <end position="180"/>
    </location>
</feature>
<feature type="topological domain" description="Extracellular" evidence="1">
    <location>
        <begin position="181"/>
        <end position="215"/>
    </location>
</feature>
<feature type="transmembrane region" description="Helical" evidence="1">
    <location>
        <begin position="216"/>
        <end position="236"/>
    </location>
</feature>
<feature type="topological domain" description="Cytoplasmic" evidence="1">
    <location>
        <begin position="237"/>
        <end position="240"/>
    </location>
</feature>
<feature type="transmembrane region" description="Helical" evidence="1">
    <location>
        <begin position="241"/>
        <end position="261"/>
    </location>
</feature>
<feature type="topological domain" description="Extracellular" evidence="1">
    <location>
        <begin position="262"/>
        <end position="274"/>
    </location>
</feature>
<feature type="transmembrane region" description="Helical" evidence="1">
    <location>
        <begin position="275"/>
        <end position="295"/>
    </location>
</feature>
<feature type="topological domain" description="Cytoplasmic" evidence="1">
    <location>
        <begin position="296"/>
        <end position="301"/>
    </location>
</feature>
<feature type="active site" evidence="1">
    <location>
        <position position="58"/>
    </location>
</feature>
<feature type="binding site" description="axial binding residue" evidence="1">
    <location>
        <position position="61"/>
    </location>
    <ligand>
        <name>heme o</name>
        <dbReference type="ChEBI" id="CHEBI:24480"/>
    </ligand>
    <ligandPart>
        <name>Fe</name>
        <dbReference type="ChEBI" id="CHEBI:18248"/>
    </ligandPart>
</feature>
<feature type="binding site" description="axial binding residue" evidence="1">
    <location>
        <position position="123"/>
    </location>
    <ligand>
        <name>heme o</name>
        <dbReference type="ChEBI" id="CHEBI:24480"/>
    </ligand>
    <ligandPart>
        <name>Fe</name>
        <dbReference type="ChEBI" id="CHEBI:18248"/>
    </ligandPart>
</feature>
<feature type="binding site" description="axial binding residue" evidence="1">
    <location>
        <position position="214"/>
    </location>
    <ligand>
        <name>heme b</name>
        <dbReference type="ChEBI" id="CHEBI:60344"/>
    </ligand>
    <ligandPart>
        <name>Fe</name>
        <dbReference type="ChEBI" id="CHEBI:18248"/>
    </ligandPart>
</feature>
<feature type="binding site" description="axial binding residue" evidence="1">
    <location>
        <position position="277"/>
    </location>
    <ligand>
        <name>heme b</name>
        <dbReference type="ChEBI" id="CHEBI:60344"/>
    </ligand>
    <ligandPart>
        <name>Fe</name>
        <dbReference type="ChEBI" id="CHEBI:18248"/>
    </ligandPart>
</feature>
<feature type="disulfide bond" description="Essential for catalytic activity" evidence="1">
    <location>
        <begin position="35"/>
        <end position="42"/>
    </location>
</feature>
<feature type="disulfide bond" evidence="1">
    <location>
        <begin position="189"/>
        <end position="195"/>
    </location>
</feature>
<keyword id="KW-1003">Cell membrane</keyword>
<keyword id="KW-1015">Disulfide bond</keyword>
<keyword id="KW-0350">Heme biosynthesis</keyword>
<keyword id="KW-0408">Iron</keyword>
<keyword id="KW-0472">Membrane</keyword>
<keyword id="KW-0479">Metal-binding</keyword>
<keyword id="KW-0560">Oxidoreductase</keyword>
<keyword id="KW-1185">Reference proteome</keyword>
<keyword id="KW-0812">Transmembrane</keyword>
<keyword id="KW-1133">Transmembrane helix</keyword>
<accession>Q5WFD1</accession>
<protein>
    <recommendedName>
        <fullName evidence="1">Heme A synthase</fullName>
        <shortName evidence="1">HAS</shortName>
        <ecNumber evidence="1">1.17.99.9</ecNumber>
    </recommendedName>
    <alternativeName>
        <fullName evidence="1">Cytochrome aa3-controlling protein</fullName>
    </alternativeName>
</protein>
<sequence>MHKGLKRLGVITSLGVLLVLIQGALVTNTGSGEGCGQTWPLCFGQVIPLDPPPETVIEFSHRLVAGIVGMLVILMAIWSWRRLKHMPETRFLAVISVFMIIFQGLLGAGAVVFGQSDLIMALHFGFSALSFASVVLLTRLAFEDSNPQKQYAPIVSKAYKGYVIFVAIYSYVAIYTGAYVKHTNATLACSGFPLCNGQWVPDVFTEAIGVQLLHRSAAILLSLLLLVLFIWTVKTFRASRVLVVCASLAMLLVIGQAASGVAVVLTYNATLTLGIFHALLISLLFTLLCYMVMLVTRHKAK</sequence>
<comment type="function">
    <text evidence="1">Catalyzes the conversion of heme O to heme A by two successive hydroxylations of the methyl group at C8. The first hydroxylation forms heme I, the second hydroxylation results in an unstable dihydroxymethyl group, which spontaneously dehydrates, resulting in the formyl group of heme A.</text>
</comment>
<comment type="catalytic activity">
    <reaction evidence="1">
        <text>Fe(II)-heme o + 2 A + H2O = Fe(II)-heme a + 2 AH2</text>
        <dbReference type="Rhea" id="RHEA:63388"/>
        <dbReference type="ChEBI" id="CHEBI:13193"/>
        <dbReference type="ChEBI" id="CHEBI:15377"/>
        <dbReference type="ChEBI" id="CHEBI:17499"/>
        <dbReference type="ChEBI" id="CHEBI:60530"/>
        <dbReference type="ChEBI" id="CHEBI:61715"/>
        <dbReference type="EC" id="1.17.99.9"/>
    </reaction>
    <physiologicalReaction direction="left-to-right" evidence="1">
        <dbReference type="Rhea" id="RHEA:63389"/>
    </physiologicalReaction>
</comment>
<comment type="cofactor">
    <cofactor evidence="1">
        <name>heme b</name>
        <dbReference type="ChEBI" id="CHEBI:60344"/>
    </cofactor>
</comment>
<comment type="pathway">
    <text evidence="1">Porphyrin-containing compound metabolism; heme A biosynthesis; heme A from heme O: step 1/1.</text>
</comment>
<comment type="subunit">
    <text evidence="1">Interacts with CtaB.</text>
</comment>
<comment type="subcellular location">
    <subcellularLocation>
        <location evidence="1">Cell membrane</location>
        <topology evidence="1">Multi-pass membrane protein</topology>
    </subcellularLocation>
</comment>
<comment type="domain">
    <text evidence="1">The N-half (TM1-TM4) and C-half (TM5-TM8) domains are connected by an intracellular loop. Each domain is formed from four-helix bundles and they align in a pseudo twofold symmetry manner. The N-half domain is the substrate-heme O binding domain and the C-half domain is the cofactor heme B binding domain.</text>
</comment>
<comment type="domain">
    <text evidence="1">The cysteines of disulfide bond Cys-35 and Cys-42 may be involved in transfer of reducing equivalents from quinol in the membrane to the active site of the enzyme.</text>
</comment>
<comment type="similarity">
    <text evidence="1">Belongs to the COX15/CtaA family. Type 1 subfamily.</text>
</comment>
<name>CTAA_SHOC1</name>
<gene>
    <name evidence="1" type="primary">ctaA</name>
    <name type="ordered locus">ABC2394</name>
</gene>